<feature type="peptide" id="PRO_0000366042" description="Brevinin-2PTb">
    <location>
        <begin position="1"/>
        <end position="33"/>
    </location>
</feature>
<feature type="disulfide bond">
    <location>
        <begin position="27"/>
        <end position="33"/>
    </location>
</feature>
<comment type="function">
    <text evidence="1">Has antibacterial activity against the Gram-positive bacterium S.aureus ATCC 25923 (MIC=9 uM) and the Gram-negative bacterium E.coli ATCC 25726 (MIC=9 uM).</text>
</comment>
<comment type="subcellular location">
    <subcellularLocation>
        <location>Secreted</location>
    </subcellularLocation>
</comment>
<comment type="tissue specificity">
    <text>Expressed by the skin glands.</text>
</comment>
<comment type="mass spectrometry" mass="3372.9" method="MALDI" evidence="1"/>
<comment type="similarity">
    <text evidence="2">Belongs to the frog skin active peptide (FSAP) family. Brevinin subfamily.</text>
</comment>
<dbReference type="GO" id="GO:0005576">
    <property type="term" value="C:extracellular region"/>
    <property type="evidence" value="ECO:0007669"/>
    <property type="project" value="UniProtKB-SubCell"/>
</dbReference>
<dbReference type="GO" id="GO:0042742">
    <property type="term" value="P:defense response to bacterium"/>
    <property type="evidence" value="ECO:0007669"/>
    <property type="project" value="UniProtKB-KW"/>
</dbReference>
<dbReference type="InterPro" id="IPR012521">
    <property type="entry name" value="Antimicrobial_frog_2"/>
</dbReference>
<dbReference type="Pfam" id="PF08023">
    <property type="entry name" value="Antimicrobial_2"/>
    <property type="match status" value="1"/>
</dbReference>
<organism>
    <name type="scientific">Pulchrana picturata</name>
    <name type="common">Malaysian fire frog</name>
    <name type="synonym">Hylarana picturata</name>
    <dbReference type="NCBI Taxonomy" id="395594"/>
    <lineage>
        <taxon>Eukaryota</taxon>
        <taxon>Metazoa</taxon>
        <taxon>Chordata</taxon>
        <taxon>Craniata</taxon>
        <taxon>Vertebrata</taxon>
        <taxon>Euteleostomi</taxon>
        <taxon>Amphibia</taxon>
        <taxon>Batrachia</taxon>
        <taxon>Anura</taxon>
        <taxon>Neobatrachia</taxon>
        <taxon>Ranoidea</taxon>
        <taxon>Ranidae</taxon>
        <taxon>Pulchrana</taxon>
    </lineage>
</organism>
<evidence type="ECO:0000269" key="1">
    <source>
    </source>
</evidence>
<evidence type="ECO:0000305" key="2"/>
<sequence length="33" mass="3377">GFKGAFKNVMFGIAKSAGKSALNALACKIDKSC</sequence>
<accession>P0C8T4</accession>
<keyword id="KW-0878">Amphibian defense peptide</keyword>
<keyword id="KW-0044">Antibiotic</keyword>
<keyword id="KW-0929">Antimicrobial</keyword>
<keyword id="KW-0903">Direct protein sequencing</keyword>
<keyword id="KW-1015">Disulfide bond</keyword>
<keyword id="KW-0964">Secreted</keyword>
<reference key="1">
    <citation type="journal article" date="2008" name="Toxicon">
        <title>Characterization of antimicrobial peptides from the skin secretions of the Malaysian frogs, Odorrana hosii and Hylarana picturata (Anura:Ranidae).</title>
        <authorList>
            <person name="Conlon J.M."/>
            <person name="Kolodziejek J."/>
            <person name="Nowotny N."/>
            <person name="Leprince J."/>
            <person name="Vaudry H."/>
            <person name="Coquet L."/>
            <person name="Jouenne T."/>
            <person name="King J.D."/>
        </authorList>
    </citation>
    <scope>PROTEIN SEQUENCE</scope>
    <scope>FUNCTION</scope>
    <scope>MASS SPECTROMETRY</scope>
    <source>
        <tissue>Skin secretion</tissue>
    </source>
</reference>
<protein>
    <recommendedName>
        <fullName>Brevinin-2PTb</fullName>
    </recommendedName>
</protein>
<name>BR2B_PULPI</name>
<proteinExistence type="evidence at protein level"/>